<protein>
    <recommendedName>
        <fullName evidence="1">SsrA-binding protein</fullName>
    </recommendedName>
    <alternativeName>
        <fullName evidence="1">Small protein B</fullName>
    </alternativeName>
</protein>
<proteinExistence type="inferred from homology"/>
<feature type="chain" id="PRO_0000411580" description="SsrA-binding protein">
    <location>
        <begin position="1"/>
        <end position="155"/>
    </location>
</feature>
<feature type="region of interest" description="Disordered" evidence="2">
    <location>
        <begin position="135"/>
        <end position="155"/>
    </location>
</feature>
<feature type="compositionally biased region" description="Basic and acidic residues" evidence="2">
    <location>
        <begin position="135"/>
        <end position="147"/>
    </location>
</feature>
<dbReference type="EMBL" id="BA000034">
    <property type="protein sequence ID" value="BAC64595.1"/>
    <property type="molecule type" value="Genomic_DNA"/>
</dbReference>
<dbReference type="RefSeq" id="WP_011054260.1">
    <property type="nucleotide sequence ID" value="NC_004606.1"/>
</dbReference>
<dbReference type="SMR" id="P0DF81"/>
<dbReference type="KEGG" id="sps:SPs1500"/>
<dbReference type="HOGENOM" id="CLU_108953_0_0_9"/>
<dbReference type="GO" id="GO:0005829">
    <property type="term" value="C:cytosol"/>
    <property type="evidence" value="ECO:0007669"/>
    <property type="project" value="TreeGrafter"/>
</dbReference>
<dbReference type="GO" id="GO:0003723">
    <property type="term" value="F:RNA binding"/>
    <property type="evidence" value="ECO:0007669"/>
    <property type="project" value="UniProtKB-UniRule"/>
</dbReference>
<dbReference type="GO" id="GO:0070929">
    <property type="term" value="P:trans-translation"/>
    <property type="evidence" value="ECO:0007669"/>
    <property type="project" value="UniProtKB-UniRule"/>
</dbReference>
<dbReference type="CDD" id="cd09294">
    <property type="entry name" value="SmpB"/>
    <property type="match status" value="1"/>
</dbReference>
<dbReference type="Gene3D" id="2.40.280.10">
    <property type="match status" value="1"/>
</dbReference>
<dbReference type="HAMAP" id="MF_00023">
    <property type="entry name" value="SmpB"/>
    <property type="match status" value="1"/>
</dbReference>
<dbReference type="InterPro" id="IPR023620">
    <property type="entry name" value="SmpB"/>
</dbReference>
<dbReference type="InterPro" id="IPR000037">
    <property type="entry name" value="SsrA-bd_prot"/>
</dbReference>
<dbReference type="InterPro" id="IPR020081">
    <property type="entry name" value="SsrA-bd_prot_CS"/>
</dbReference>
<dbReference type="NCBIfam" id="NF003843">
    <property type="entry name" value="PRK05422.1"/>
    <property type="match status" value="1"/>
</dbReference>
<dbReference type="NCBIfam" id="TIGR00086">
    <property type="entry name" value="smpB"/>
    <property type="match status" value="1"/>
</dbReference>
<dbReference type="PANTHER" id="PTHR30308:SF2">
    <property type="entry name" value="SSRA-BINDING PROTEIN"/>
    <property type="match status" value="1"/>
</dbReference>
<dbReference type="PANTHER" id="PTHR30308">
    <property type="entry name" value="TMRNA-BINDING COMPONENT OF TRANS-TRANSLATION TAGGING COMPLEX"/>
    <property type="match status" value="1"/>
</dbReference>
<dbReference type="Pfam" id="PF01668">
    <property type="entry name" value="SmpB"/>
    <property type="match status" value="1"/>
</dbReference>
<dbReference type="SUPFAM" id="SSF74982">
    <property type="entry name" value="Small protein B (SmpB)"/>
    <property type="match status" value="1"/>
</dbReference>
<dbReference type="PROSITE" id="PS01317">
    <property type="entry name" value="SSRP"/>
    <property type="match status" value="1"/>
</dbReference>
<gene>
    <name evidence="1" type="primary">smpB</name>
    <name type="ordered locus">SPs1500</name>
</gene>
<comment type="function">
    <text evidence="1">Required for rescue of stalled ribosomes mediated by trans-translation. Binds to transfer-messenger RNA (tmRNA), required for stable association of tmRNA with ribosomes. tmRNA and SmpB together mimic tRNA shape, replacing the anticodon stem-loop with SmpB. tmRNA is encoded by the ssrA gene; the 2 termini fold to resemble tRNA(Ala) and it encodes a 'tag peptide', a short internal open reading frame. During trans-translation Ala-aminoacylated tmRNA acts like a tRNA, entering the A-site of stalled ribosomes, displacing the stalled mRNA. The ribosome then switches to translate the ORF on the tmRNA; the nascent peptide is terminated with the 'tag peptide' encoded by the tmRNA and targeted for degradation. The ribosome is freed to recommence translation, which seems to be the essential function of trans-translation.</text>
</comment>
<comment type="subcellular location">
    <subcellularLocation>
        <location evidence="1">Cytoplasm</location>
    </subcellularLocation>
    <text evidence="1">The tmRNA-SmpB complex associates with stalled 70S ribosomes.</text>
</comment>
<comment type="similarity">
    <text evidence="1">Belongs to the SmpB family.</text>
</comment>
<name>SSRP_STRPQ</name>
<evidence type="ECO:0000255" key="1">
    <source>
        <dbReference type="HAMAP-Rule" id="MF_00023"/>
    </source>
</evidence>
<evidence type="ECO:0000256" key="2">
    <source>
        <dbReference type="SAM" id="MobiDB-lite"/>
    </source>
</evidence>
<sequence length="155" mass="17788">MAKGEGHILAQNKKARHDYHIVETVEAGIVLTGTEIKSVRAARIQLKDGFAQIKNGEAWLVNVHIAPFEQGNIWNADPERTRKLLLKKREITHLENELKGSGMTLVPLKVYLKDGFAKVLIGLAKGKHEYDKRETIKRRDQERDIKKQMKHYNAR</sequence>
<keyword id="KW-0963">Cytoplasm</keyword>
<keyword id="KW-0694">RNA-binding</keyword>
<reference key="1">
    <citation type="journal article" date="2003" name="Genome Res.">
        <title>Genome sequence of an M3 strain of Streptococcus pyogenes reveals a large-scale genomic rearrangement in invasive strains and new insights into phage evolution.</title>
        <authorList>
            <person name="Nakagawa I."/>
            <person name="Kurokawa K."/>
            <person name="Yamashita A."/>
            <person name="Nakata M."/>
            <person name="Tomiyasu Y."/>
            <person name="Okahashi N."/>
            <person name="Kawabata S."/>
            <person name="Yamazaki K."/>
            <person name="Shiba T."/>
            <person name="Yasunaga T."/>
            <person name="Hayashi H."/>
            <person name="Hattori M."/>
            <person name="Hamada S."/>
        </authorList>
    </citation>
    <scope>NUCLEOTIDE SEQUENCE [LARGE SCALE GENOMIC DNA]</scope>
    <source>
        <strain>SSI-1</strain>
    </source>
</reference>
<organism>
    <name type="scientific">Streptococcus pyogenes serotype M3 (strain SSI-1)</name>
    <dbReference type="NCBI Taxonomy" id="193567"/>
    <lineage>
        <taxon>Bacteria</taxon>
        <taxon>Bacillati</taxon>
        <taxon>Bacillota</taxon>
        <taxon>Bacilli</taxon>
        <taxon>Lactobacillales</taxon>
        <taxon>Streptococcaceae</taxon>
        <taxon>Streptococcus</taxon>
    </lineage>
</organism>
<accession>P0DF81</accession>
<accession>Q8K8C6</accession>